<dbReference type="EMBL" id="Y11913">
    <property type="protein sequence ID" value="CAA72667.1"/>
    <property type="molecule type" value="Genomic_DNA"/>
</dbReference>
<dbReference type="RefSeq" id="WP_013068989.1">
    <property type="nucleotide sequence ID" value="NZ_VIBE01000016.1"/>
</dbReference>
<dbReference type="SMR" id="P97056"/>
<dbReference type="OMA" id="EIYRPIH"/>
<dbReference type="Gene3D" id="3.10.20.280">
    <property type="entry name" value="RnfH-like"/>
    <property type="match status" value="1"/>
</dbReference>
<dbReference type="HAMAP" id="MF_00460">
    <property type="entry name" value="UPF0125_RnfH"/>
    <property type="match status" value="1"/>
</dbReference>
<dbReference type="InterPro" id="IPR016155">
    <property type="entry name" value="Mopterin_synth/thiamin_S_b"/>
</dbReference>
<dbReference type="InterPro" id="IPR005346">
    <property type="entry name" value="RnfH"/>
</dbReference>
<dbReference type="InterPro" id="IPR037021">
    <property type="entry name" value="RnfH_sf"/>
</dbReference>
<dbReference type="PANTHER" id="PTHR37483">
    <property type="entry name" value="UPF0125 PROTEIN RATB"/>
    <property type="match status" value="1"/>
</dbReference>
<dbReference type="PANTHER" id="PTHR37483:SF1">
    <property type="entry name" value="UPF0125 PROTEIN RATB"/>
    <property type="match status" value="1"/>
</dbReference>
<dbReference type="Pfam" id="PF03658">
    <property type="entry name" value="Ub-RnfH"/>
    <property type="match status" value="1"/>
</dbReference>
<dbReference type="SUPFAM" id="SSF54285">
    <property type="entry name" value="MoaD/ThiS"/>
    <property type="match status" value="1"/>
</dbReference>
<sequence>MIVGVAYAKPTVQVWKHVDVPDTATARDAIEKSGLLDQFPEIDLSTQKIGIFGQICPLEKPLKEGDRVEIYRPIHPEAELLEKRS</sequence>
<protein>
    <recommendedName>
        <fullName>Protein RnfH</fullName>
    </recommendedName>
</protein>
<comment type="similarity">
    <text evidence="1">Belongs to the UPF0125 (RnfH) family.</text>
</comment>
<accession>P97056</accession>
<evidence type="ECO:0000305" key="1"/>
<name>RNFH_RHOCA</name>
<gene>
    <name type="primary">rnfH</name>
</gene>
<feature type="chain" id="PRO_0000192481" description="Protein RnfH">
    <location>
        <begin position="1"/>
        <end position="85"/>
    </location>
</feature>
<proteinExistence type="inferred from homology"/>
<reference key="1">
    <citation type="journal article" date="1998" name="Eur. J. Biochem.">
        <title>Overexpression in Escherichia coli of the rnf genes from Rhodobacter capsulatus -- characterization of two membrane-bound iron-sulfur proteins.</title>
        <authorList>
            <person name="Jouanneau Y."/>
            <person name="Jeong H.-S."/>
            <person name="Hugo N."/>
            <person name="Meyer C."/>
            <person name="Willison J.C."/>
        </authorList>
    </citation>
    <scope>NUCLEOTIDE SEQUENCE [GENOMIC DNA]</scope>
    <source>
        <strain>ATCC 33303 / B10</strain>
    </source>
</reference>
<organism>
    <name type="scientific">Rhodobacter capsulatus</name>
    <name type="common">Rhodopseudomonas capsulata</name>
    <dbReference type="NCBI Taxonomy" id="1061"/>
    <lineage>
        <taxon>Bacteria</taxon>
        <taxon>Pseudomonadati</taxon>
        <taxon>Pseudomonadota</taxon>
        <taxon>Alphaproteobacteria</taxon>
        <taxon>Rhodobacterales</taxon>
        <taxon>Rhodobacter group</taxon>
        <taxon>Rhodobacter</taxon>
    </lineage>
</organism>